<comment type="function">
    <text evidence="1">Binds directly to 23S rRNA. The L1 stalk is quite mobile in the ribosome, and is involved in E site tRNA release.</text>
</comment>
<comment type="function">
    <text evidence="1">Protein L1 is also a translational repressor protein, it controls the translation of the L11 operon by binding to its mRNA.</text>
</comment>
<comment type="subunit">
    <text evidence="1">Part of the 50S ribosomal subunit.</text>
</comment>
<comment type="similarity">
    <text evidence="1">Belongs to the universal ribosomal protein uL1 family.</text>
</comment>
<keyword id="KW-1185">Reference proteome</keyword>
<keyword id="KW-0678">Repressor</keyword>
<keyword id="KW-0687">Ribonucleoprotein</keyword>
<keyword id="KW-0689">Ribosomal protein</keyword>
<keyword id="KW-0694">RNA-binding</keyword>
<keyword id="KW-0699">rRNA-binding</keyword>
<keyword id="KW-0810">Translation regulation</keyword>
<keyword id="KW-0820">tRNA-binding</keyword>
<sequence length="232" mass="24278">MAKISKRRQAFAAKVDRQKLYAIDDALALVKECASAKFNESIDVAVQLGIDAKKSDQVVRGSVVLPAGTGKSVRVAVFAQGEKAEQARAAGAEVVGMEDLAEQIKAGQMDFDIVIASPDTMRIVGTLGQILGPRGLMPNPKVGTVTPDVATAVKNAKAGQVQFRVDKAGIIHATIGRASFEPAALRSNLSALIEALQKAKPATSKGVYLRKIALSSTMGVGVRVDQATLAAQ</sequence>
<evidence type="ECO:0000255" key="1">
    <source>
        <dbReference type="HAMAP-Rule" id="MF_01318"/>
    </source>
</evidence>
<evidence type="ECO:0000305" key="2"/>
<dbReference type="EMBL" id="CP000868">
    <property type="protein sequence ID" value="ABX13933.1"/>
    <property type="molecule type" value="Genomic_DNA"/>
</dbReference>
<dbReference type="EMBL" id="AP009385">
    <property type="protein sequence ID" value="BAG44901.1"/>
    <property type="molecule type" value="Genomic_DNA"/>
</dbReference>
<dbReference type="RefSeq" id="WP_006400670.1">
    <property type="nucleotide sequence ID" value="NC_010804.1"/>
</dbReference>
<dbReference type="SMR" id="A9ADI2"/>
<dbReference type="STRING" id="395019.BMULJ_03016"/>
<dbReference type="GeneID" id="89568630"/>
<dbReference type="KEGG" id="bmj:BMULJ_03016"/>
<dbReference type="KEGG" id="bmu:Bmul_0238"/>
<dbReference type="eggNOG" id="COG0081">
    <property type="taxonomic scope" value="Bacteria"/>
</dbReference>
<dbReference type="HOGENOM" id="CLU_062853_0_0_4"/>
<dbReference type="Proteomes" id="UP000008815">
    <property type="component" value="Chromosome 1"/>
</dbReference>
<dbReference type="GO" id="GO:0022625">
    <property type="term" value="C:cytosolic large ribosomal subunit"/>
    <property type="evidence" value="ECO:0007669"/>
    <property type="project" value="TreeGrafter"/>
</dbReference>
<dbReference type="GO" id="GO:0019843">
    <property type="term" value="F:rRNA binding"/>
    <property type="evidence" value="ECO:0007669"/>
    <property type="project" value="UniProtKB-UniRule"/>
</dbReference>
<dbReference type="GO" id="GO:0003735">
    <property type="term" value="F:structural constituent of ribosome"/>
    <property type="evidence" value="ECO:0007669"/>
    <property type="project" value="InterPro"/>
</dbReference>
<dbReference type="GO" id="GO:0000049">
    <property type="term" value="F:tRNA binding"/>
    <property type="evidence" value="ECO:0007669"/>
    <property type="project" value="UniProtKB-KW"/>
</dbReference>
<dbReference type="GO" id="GO:0006417">
    <property type="term" value="P:regulation of translation"/>
    <property type="evidence" value="ECO:0007669"/>
    <property type="project" value="UniProtKB-KW"/>
</dbReference>
<dbReference type="GO" id="GO:0006412">
    <property type="term" value="P:translation"/>
    <property type="evidence" value="ECO:0007669"/>
    <property type="project" value="UniProtKB-UniRule"/>
</dbReference>
<dbReference type="CDD" id="cd00403">
    <property type="entry name" value="Ribosomal_L1"/>
    <property type="match status" value="1"/>
</dbReference>
<dbReference type="FunFam" id="3.40.50.790:FF:000001">
    <property type="entry name" value="50S ribosomal protein L1"/>
    <property type="match status" value="1"/>
</dbReference>
<dbReference type="Gene3D" id="3.30.190.20">
    <property type="match status" value="1"/>
</dbReference>
<dbReference type="Gene3D" id="3.40.50.790">
    <property type="match status" value="1"/>
</dbReference>
<dbReference type="HAMAP" id="MF_01318_B">
    <property type="entry name" value="Ribosomal_uL1_B"/>
    <property type="match status" value="1"/>
</dbReference>
<dbReference type="InterPro" id="IPR005878">
    <property type="entry name" value="Ribosom_uL1_bac-type"/>
</dbReference>
<dbReference type="InterPro" id="IPR002143">
    <property type="entry name" value="Ribosomal_uL1"/>
</dbReference>
<dbReference type="InterPro" id="IPR023674">
    <property type="entry name" value="Ribosomal_uL1-like"/>
</dbReference>
<dbReference type="InterPro" id="IPR028364">
    <property type="entry name" value="Ribosomal_uL1/biogenesis"/>
</dbReference>
<dbReference type="InterPro" id="IPR016095">
    <property type="entry name" value="Ribosomal_uL1_3-a/b-sand"/>
</dbReference>
<dbReference type="InterPro" id="IPR023673">
    <property type="entry name" value="Ribosomal_uL1_CS"/>
</dbReference>
<dbReference type="NCBIfam" id="TIGR01169">
    <property type="entry name" value="rplA_bact"/>
    <property type="match status" value="1"/>
</dbReference>
<dbReference type="PANTHER" id="PTHR36427">
    <property type="entry name" value="54S RIBOSOMAL PROTEIN L1, MITOCHONDRIAL"/>
    <property type="match status" value="1"/>
</dbReference>
<dbReference type="PANTHER" id="PTHR36427:SF3">
    <property type="entry name" value="LARGE RIBOSOMAL SUBUNIT PROTEIN UL1M"/>
    <property type="match status" value="1"/>
</dbReference>
<dbReference type="Pfam" id="PF00687">
    <property type="entry name" value="Ribosomal_L1"/>
    <property type="match status" value="1"/>
</dbReference>
<dbReference type="PIRSF" id="PIRSF002155">
    <property type="entry name" value="Ribosomal_L1"/>
    <property type="match status" value="1"/>
</dbReference>
<dbReference type="SUPFAM" id="SSF56808">
    <property type="entry name" value="Ribosomal protein L1"/>
    <property type="match status" value="1"/>
</dbReference>
<dbReference type="PROSITE" id="PS01199">
    <property type="entry name" value="RIBOSOMAL_L1"/>
    <property type="match status" value="1"/>
</dbReference>
<accession>A9ADI2</accession>
<reference key="1">
    <citation type="submission" date="2007-10" db="EMBL/GenBank/DDBJ databases">
        <title>Complete sequence of chromosome 1 of Burkholderia multivorans ATCC 17616.</title>
        <authorList>
            <person name="Copeland A."/>
            <person name="Lucas S."/>
            <person name="Lapidus A."/>
            <person name="Barry K."/>
            <person name="Glavina del Rio T."/>
            <person name="Dalin E."/>
            <person name="Tice H."/>
            <person name="Pitluck S."/>
            <person name="Chain P."/>
            <person name="Malfatti S."/>
            <person name="Shin M."/>
            <person name="Vergez L."/>
            <person name="Schmutz J."/>
            <person name="Larimer F."/>
            <person name="Land M."/>
            <person name="Hauser L."/>
            <person name="Kyrpides N."/>
            <person name="Kim E."/>
            <person name="Tiedje J."/>
            <person name="Richardson P."/>
        </authorList>
    </citation>
    <scope>NUCLEOTIDE SEQUENCE [LARGE SCALE GENOMIC DNA]</scope>
    <source>
        <strain>ATCC 17616 / 249</strain>
    </source>
</reference>
<reference key="2">
    <citation type="submission" date="2007-04" db="EMBL/GenBank/DDBJ databases">
        <title>Complete genome sequence of Burkholderia multivorans ATCC 17616.</title>
        <authorList>
            <person name="Ohtsubo Y."/>
            <person name="Yamashita A."/>
            <person name="Kurokawa K."/>
            <person name="Takami H."/>
            <person name="Yuhara S."/>
            <person name="Nishiyama E."/>
            <person name="Endo R."/>
            <person name="Miyazaki R."/>
            <person name="Ono A."/>
            <person name="Yano K."/>
            <person name="Ito M."/>
            <person name="Sota M."/>
            <person name="Yuji N."/>
            <person name="Hattori M."/>
            <person name="Tsuda M."/>
        </authorList>
    </citation>
    <scope>NUCLEOTIDE SEQUENCE [LARGE SCALE GENOMIC DNA]</scope>
    <source>
        <strain>ATCC 17616 / 249</strain>
    </source>
</reference>
<gene>
    <name evidence="1" type="primary">rplA</name>
    <name type="ordered locus">Bmul_0238</name>
    <name type="ordered locus">BMULJ_03016</name>
</gene>
<organism>
    <name type="scientific">Burkholderia multivorans (strain ATCC 17616 / 249)</name>
    <dbReference type="NCBI Taxonomy" id="395019"/>
    <lineage>
        <taxon>Bacteria</taxon>
        <taxon>Pseudomonadati</taxon>
        <taxon>Pseudomonadota</taxon>
        <taxon>Betaproteobacteria</taxon>
        <taxon>Burkholderiales</taxon>
        <taxon>Burkholderiaceae</taxon>
        <taxon>Burkholderia</taxon>
        <taxon>Burkholderia cepacia complex</taxon>
    </lineage>
</organism>
<proteinExistence type="inferred from homology"/>
<protein>
    <recommendedName>
        <fullName evidence="1">Large ribosomal subunit protein uL1</fullName>
    </recommendedName>
    <alternativeName>
        <fullName evidence="2">50S ribosomal protein L1</fullName>
    </alternativeName>
</protein>
<name>RL1_BURM1</name>
<feature type="chain" id="PRO_1000141373" description="Large ribosomal subunit protein uL1">
    <location>
        <begin position="1"/>
        <end position="232"/>
    </location>
</feature>